<name>CLPX_LEGPL</name>
<gene>
    <name evidence="1" type="primary">clpX</name>
    <name type="ordered locus">lpl1824</name>
</gene>
<proteinExistence type="inferred from homology"/>
<dbReference type="EMBL" id="CR628337">
    <property type="protein sequence ID" value="CAH16063.1"/>
    <property type="molecule type" value="Genomic_DNA"/>
</dbReference>
<dbReference type="RefSeq" id="WP_011215825.1">
    <property type="nucleotide sequence ID" value="NC_006369.1"/>
</dbReference>
<dbReference type="SMR" id="Q5WVJ1"/>
<dbReference type="KEGG" id="lpf:lpl1824"/>
<dbReference type="LegioList" id="lpl1824"/>
<dbReference type="HOGENOM" id="CLU_014218_8_2_6"/>
<dbReference type="Proteomes" id="UP000002517">
    <property type="component" value="Chromosome"/>
</dbReference>
<dbReference type="GO" id="GO:0009376">
    <property type="term" value="C:HslUV protease complex"/>
    <property type="evidence" value="ECO:0007669"/>
    <property type="project" value="TreeGrafter"/>
</dbReference>
<dbReference type="GO" id="GO:0005524">
    <property type="term" value="F:ATP binding"/>
    <property type="evidence" value="ECO:0007669"/>
    <property type="project" value="UniProtKB-UniRule"/>
</dbReference>
<dbReference type="GO" id="GO:0016887">
    <property type="term" value="F:ATP hydrolysis activity"/>
    <property type="evidence" value="ECO:0007669"/>
    <property type="project" value="InterPro"/>
</dbReference>
<dbReference type="GO" id="GO:0140662">
    <property type="term" value="F:ATP-dependent protein folding chaperone"/>
    <property type="evidence" value="ECO:0007669"/>
    <property type="project" value="InterPro"/>
</dbReference>
<dbReference type="GO" id="GO:0046983">
    <property type="term" value="F:protein dimerization activity"/>
    <property type="evidence" value="ECO:0007669"/>
    <property type="project" value="InterPro"/>
</dbReference>
<dbReference type="GO" id="GO:0051082">
    <property type="term" value="F:unfolded protein binding"/>
    <property type="evidence" value="ECO:0007669"/>
    <property type="project" value="UniProtKB-UniRule"/>
</dbReference>
<dbReference type="GO" id="GO:0008270">
    <property type="term" value="F:zinc ion binding"/>
    <property type="evidence" value="ECO:0007669"/>
    <property type="project" value="InterPro"/>
</dbReference>
<dbReference type="GO" id="GO:0051301">
    <property type="term" value="P:cell division"/>
    <property type="evidence" value="ECO:0007669"/>
    <property type="project" value="TreeGrafter"/>
</dbReference>
<dbReference type="GO" id="GO:0051603">
    <property type="term" value="P:proteolysis involved in protein catabolic process"/>
    <property type="evidence" value="ECO:0007669"/>
    <property type="project" value="TreeGrafter"/>
</dbReference>
<dbReference type="CDD" id="cd19497">
    <property type="entry name" value="RecA-like_ClpX"/>
    <property type="match status" value="1"/>
</dbReference>
<dbReference type="FunFam" id="1.10.8.60:FF:000002">
    <property type="entry name" value="ATP-dependent Clp protease ATP-binding subunit ClpX"/>
    <property type="match status" value="1"/>
</dbReference>
<dbReference type="FunFam" id="3.40.50.300:FF:000005">
    <property type="entry name" value="ATP-dependent Clp protease ATP-binding subunit ClpX"/>
    <property type="match status" value="1"/>
</dbReference>
<dbReference type="Gene3D" id="1.10.8.60">
    <property type="match status" value="1"/>
</dbReference>
<dbReference type="Gene3D" id="6.20.220.10">
    <property type="entry name" value="ClpX chaperone, C4-type zinc finger domain"/>
    <property type="match status" value="1"/>
</dbReference>
<dbReference type="Gene3D" id="3.40.50.300">
    <property type="entry name" value="P-loop containing nucleotide triphosphate hydrolases"/>
    <property type="match status" value="1"/>
</dbReference>
<dbReference type="HAMAP" id="MF_00175">
    <property type="entry name" value="ClpX"/>
    <property type="match status" value="1"/>
</dbReference>
<dbReference type="InterPro" id="IPR003593">
    <property type="entry name" value="AAA+_ATPase"/>
</dbReference>
<dbReference type="InterPro" id="IPR050052">
    <property type="entry name" value="ATP-dep_Clp_protease_ClpX"/>
</dbReference>
<dbReference type="InterPro" id="IPR003959">
    <property type="entry name" value="ATPase_AAA_core"/>
</dbReference>
<dbReference type="InterPro" id="IPR019489">
    <property type="entry name" value="Clp_ATPase_C"/>
</dbReference>
<dbReference type="InterPro" id="IPR004487">
    <property type="entry name" value="Clp_protease_ATP-bd_su_ClpX"/>
</dbReference>
<dbReference type="InterPro" id="IPR046425">
    <property type="entry name" value="ClpX_bact"/>
</dbReference>
<dbReference type="InterPro" id="IPR027417">
    <property type="entry name" value="P-loop_NTPase"/>
</dbReference>
<dbReference type="InterPro" id="IPR010603">
    <property type="entry name" value="Znf_CppX_C4"/>
</dbReference>
<dbReference type="InterPro" id="IPR038366">
    <property type="entry name" value="Znf_CppX_C4_sf"/>
</dbReference>
<dbReference type="NCBIfam" id="TIGR00382">
    <property type="entry name" value="clpX"/>
    <property type="match status" value="1"/>
</dbReference>
<dbReference type="NCBIfam" id="NF003745">
    <property type="entry name" value="PRK05342.1"/>
    <property type="match status" value="1"/>
</dbReference>
<dbReference type="PANTHER" id="PTHR48102:SF7">
    <property type="entry name" value="ATP-DEPENDENT CLP PROTEASE ATP-BINDING SUBUNIT CLPX-LIKE, MITOCHONDRIAL"/>
    <property type="match status" value="1"/>
</dbReference>
<dbReference type="PANTHER" id="PTHR48102">
    <property type="entry name" value="ATP-DEPENDENT CLP PROTEASE ATP-BINDING SUBUNIT CLPX-LIKE, MITOCHONDRIAL-RELATED"/>
    <property type="match status" value="1"/>
</dbReference>
<dbReference type="Pfam" id="PF07724">
    <property type="entry name" value="AAA_2"/>
    <property type="match status" value="1"/>
</dbReference>
<dbReference type="Pfam" id="PF10431">
    <property type="entry name" value="ClpB_D2-small"/>
    <property type="match status" value="1"/>
</dbReference>
<dbReference type="Pfam" id="PF06689">
    <property type="entry name" value="zf-C4_ClpX"/>
    <property type="match status" value="1"/>
</dbReference>
<dbReference type="SMART" id="SM00382">
    <property type="entry name" value="AAA"/>
    <property type="match status" value="1"/>
</dbReference>
<dbReference type="SMART" id="SM01086">
    <property type="entry name" value="ClpB_D2-small"/>
    <property type="match status" value="1"/>
</dbReference>
<dbReference type="SMART" id="SM00994">
    <property type="entry name" value="zf-C4_ClpX"/>
    <property type="match status" value="1"/>
</dbReference>
<dbReference type="SUPFAM" id="SSF57716">
    <property type="entry name" value="Glucocorticoid receptor-like (DNA-binding domain)"/>
    <property type="match status" value="1"/>
</dbReference>
<dbReference type="SUPFAM" id="SSF52540">
    <property type="entry name" value="P-loop containing nucleoside triphosphate hydrolases"/>
    <property type="match status" value="1"/>
</dbReference>
<dbReference type="PROSITE" id="PS51902">
    <property type="entry name" value="CLPX_ZB"/>
    <property type="match status" value="1"/>
</dbReference>
<feature type="chain" id="PRO_0000160374" description="ATP-dependent Clp protease ATP-binding subunit ClpX">
    <location>
        <begin position="1"/>
        <end position="424"/>
    </location>
</feature>
<feature type="domain" description="ClpX-type ZB" evidence="2">
    <location>
        <begin position="1"/>
        <end position="56"/>
    </location>
</feature>
<feature type="binding site" evidence="2">
    <location>
        <position position="15"/>
    </location>
    <ligand>
        <name>Zn(2+)</name>
        <dbReference type="ChEBI" id="CHEBI:29105"/>
    </ligand>
</feature>
<feature type="binding site" evidence="2">
    <location>
        <position position="18"/>
    </location>
    <ligand>
        <name>Zn(2+)</name>
        <dbReference type="ChEBI" id="CHEBI:29105"/>
    </ligand>
</feature>
<feature type="binding site" evidence="2">
    <location>
        <position position="37"/>
    </location>
    <ligand>
        <name>Zn(2+)</name>
        <dbReference type="ChEBI" id="CHEBI:29105"/>
    </ligand>
</feature>
<feature type="binding site" evidence="2">
    <location>
        <position position="40"/>
    </location>
    <ligand>
        <name>Zn(2+)</name>
        <dbReference type="ChEBI" id="CHEBI:29105"/>
    </ligand>
</feature>
<feature type="binding site" evidence="1">
    <location>
        <begin position="118"/>
        <end position="125"/>
    </location>
    <ligand>
        <name>ATP</name>
        <dbReference type="ChEBI" id="CHEBI:30616"/>
    </ligand>
</feature>
<reference key="1">
    <citation type="journal article" date="2004" name="Nat. Genet.">
        <title>Evidence in the Legionella pneumophila genome for exploitation of host cell functions and high genome plasticity.</title>
        <authorList>
            <person name="Cazalet C."/>
            <person name="Rusniok C."/>
            <person name="Brueggemann H."/>
            <person name="Zidane N."/>
            <person name="Magnier A."/>
            <person name="Ma L."/>
            <person name="Tichit M."/>
            <person name="Jarraud S."/>
            <person name="Bouchier C."/>
            <person name="Vandenesch F."/>
            <person name="Kunst F."/>
            <person name="Etienne J."/>
            <person name="Glaser P."/>
            <person name="Buchrieser C."/>
        </authorList>
    </citation>
    <scope>NUCLEOTIDE SEQUENCE [LARGE SCALE GENOMIC DNA]</scope>
    <source>
        <strain>Lens</strain>
    </source>
</reference>
<protein>
    <recommendedName>
        <fullName evidence="1">ATP-dependent Clp protease ATP-binding subunit ClpX</fullName>
    </recommendedName>
</protein>
<accession>Q5WVJ1</accession>
<sequence length="424" mass="46641">MSKSGNGNGDKVLYCSFCGKSQHEVKKLIAGPSVFVCDECVELCNDIIREETHETHEETEARLPTPKEISNFLDEYVIGQQHAKKVLSVAVYNHYKRLQHKSEDGVELGKSNILLIGPTGSGKTLLAQTLARILNVPFAMADATTLTEAGYVGEDVENIIQKLLQKCDYDVDKAQQGIVYIDEIDKISRKSDNPSITRDVSGEGVQQALLKLIEGTVASVPPQGGRKHPQQEFLQVDTSNILFICGGAFAGLDKVIRERSDKSSIGFSAQLKSKKSSNDEVSKVLGQLESDDLIKYGLIPEFVGRLPVVTTLQELDEAALIDILTRPKNALTKQFQSLFKMEGSELEFRDEALIAIAKKALERKMGARGLRSILENILLDTMYDLPSLEGVNKVVIDESVVNGLSKPILIYEQDEKKSASGSKD</sequence>
<organism>
    <name type="scientific">Legionella pneumophila (strain Lens)</name>
    <dbReference type="NCBI Taxonomy" id="297245"/>
    <lineage>
        <taxon>Bacteria</taxon>
        <taxon>Pseudomonadati</taxon>
        <taxon>Pseudomonadota</taxon>
        <taxon>Gammaproteobacteria</taxon>
        <taxon>Legionellales</taxon>
        <taxon>Legionellaceae</taxon>
        <taxon>Legionella</taxon>
    </lineage>
</organism>
<evidence type="ECO:0000255" key="1">
    <source>
        <dbReference type="HAMAP-Rule" id="MF_00175"/>
    </source>
</evidence>
<evidence type="ECO:0000255" key="2">
    <source>
        <dbReference type="PROSITE-ProRule" id="PRU01250"/>
    </source>
</evidence>
<comment type="function">
    <text evidence="1">ATP-dependent specificity component of the Clp protease. It directs the protease to specific substrates. Can perform chaperone functions in the absence of ClpP.</text>
</comment>
<comment type="subunit">
    <text evidence="1">Component of the ClpX-ClpP complex. Forms a hexameric ring that, in the presence of ATP, binds to fourteen ClpP subunits assembled into a disk-like structure with a central cavity, resembling the structure of eukaryotic proteasomes.</text>
</comment>
<comment type="similarity">
    <text evidence="1">Belongs to the ClpX chaperone family.</text>
</comment>
<keyword id="KW-0067">ATP-binding</keyword>
<keyword id="KW-0143">Chaperone</keyword>
<keyword id="KW-0479">Metal-binding</keyword>
<keyword id="KW-0547">Nucleotide-binding</keyword>
<keyword id="KW-0862">Zinc</keyword>